<accession>P53154</accession>
<accession>D6VU60</accession>
<feature type="chain" id="PRO_0000213132" description="Membrane-bound O-acyltransferase GUP1">
    <location>
        <begin position="1"/>
        <end position="560"/>
    </location>
</feature>
<feature type="topological domain" description="Extracellular" evidence="12 20 22">
    <location>
        <begin position="1"/>
        <end position="43"/>
    </location>
</feature>
<feature type="transmembrane region" description="Helical" evidence="1">
    <location>
        <begin position="44"/>
        <end position="64"/>
    </location>
</feature>
<feature type="topological domain" description="Cytoplasmic" evidence="22">
    <location>
        <begin position="65"/>
        <end position="101"/>
    </location>
</feature>
<feature type="transmembrane region" description="Helical" evidence="1">
    <location>
        <begin position="102"/>
        <end position="122"/>
    </location>
</feature>
<feature type="topological domain" description="Extracellular" evidence="22">
    <location>
        <begin position="123"/>
        <end position="131"/>
    </location>
</feature>
<feature type="transmembrane region" description="Helical" evidence="1">
    <location>
        <begin position="132"/>
        <end position="152"/>
    </location>
</feature>
<feature type="topological domain" description="Cytoplasmic" evidence="22">
    <location>
        <begin position="153"/>
        <end position="165"/>
    </location>
</feature>
<feature type="transmembrane region" description="Helical" evidence="1">
    <location>
        <begin position="166"/>
        <end position="185"/>
    </location>
</feature>
<feature type="topological domain" description="Extracellular" evidence="22">
    <location>
        <begin position="186"/>
        <end position="276"/>
    </location>
</feature>
<feature type="transmembrane region" description="Helical" evidence="1">
    <location>
        <begin position="277"/>
        <end position="297"/>
    </location>
</feature>
<feature type="topological domain" description="Cytoplasmic" evidence="22">
    <location>
        <begin position="298"/>
        <end position="322"/>
    </location>
</feature>
<feature type="transmembrane region" description="Helical" evidence="1">
    <location>
        <begin position="323"/>
        <end position="343"/>
    </location>
</feature>
<feature type="topological domain" description="Extracellular" evidence="22">
    <location>
        <begin position="344"/>
        <end position="352"/>
    </location>
</feature>
<feature type="transmembrane region" description="Helical" evidence="1">
    <location>
        <begin position="353"/>
        <end position="373"/>
    </location>
</feature>
<feature type="topological domain" description="Cytoplasmic" evidence="22">
    <location>
        <begin position="374"/>
        <end position="432"/>
    </location>
</feature>
<feature type="transmembrane region" description="Helical" evidence="1">
    <location>
        <begin position="433"/>
        <end position="453"/>
    </location>
</feature>
<feature type="transmembrane region" description="Helical" evidence="1">
    <location>
        <begin position="454"/>
        <end position="474"/>
    </location>
</feature>
<feature type="topological domain" description="Cytoplasmic" evidence="22">
    <location>
        <begin position="475"/>
        <end position="485"/>
    </location>
</feature>
<feature type="transmembrane region" description="Helical" evidence="1">
    <location>
        <begin position="486"/>
        <end position="506"/>
    </location>
</feature>
<feature type="topological domain" description="Extracellular" evidence="22">
    <location>
        <begin position="507"/>
        <end position="526"/>
    </location>
</feature>
<feature type="transmembrane region" description="Helical" evidence="1">
    <location>
        <begin position="527"/>
        <end position="547"/>
    </location>
</feature>
<feature type="topological domain" description="Cytoplasmic" evidence="8 12 20">
    <location>
        <begin position="548"/>
        <end position="560"/>
    </location>
</feature>
<feature type="active site" evidence="21">
    <location>
        <position position="447"/>
    </location>
</feature>
<feature type="mutagenesis site" description="Deficient in GPI anchor remodeling." evidence="7">
    <original>H</original>
    <variation>A</variation>
    <location>
        <position position="447"/>
    </location>
</feature>
<name>GUP1_YEAST</name>
<dbReference type="EMBL" id="Z72606">
    <property type="protein sequence ID" value="CAA96789.1"/>
    <property type="molecule type" value="Genomic_DNA"/>
</dbReference>
<dbReference type="EMBL" id="BK006941">
    <property type="protein sequence ID" value="DAA08021.1"/>
    <property type="molecule type" value="Genomic_DNA"/>
</dbReference>
<dbReference type="PIR" id="S64091">
    <property type="entry name" value="S64091"/>
</dbReference>
<dbReference type="RefSeq" id="NP_011431.1">
    <property type="nucleotide sequence ID" value="NM_001180949.1"/>
</dbReference>
<dbReference type="SMR" id="P53154"/>
<dbReference type="BioGRID" id="33166">
    <property type="interactions" value="508"/>
</dbReference>
<dbReference type="DIP" id="DIP-4367N"/>
<dbReference type="FunCoup" id="P53154">
    <property type="interactions" value="148"/>
</dbReference>
<dbReference type="IntAct" id="P53154">
    <property type="interactions" value="1"/>
</dbReference>
<dbReference type="MINT" id="P53154"/>
<dbReference type="STRING" id="4932.YGL084C"/>
<dbReference type="TCDB" id="2.A.50.1.1">
    <property type="family name" value="the glycerol uptake (gup) or membrane-bound acyl transferase (mboat) family"/>
</dbReference>
<dbReference type="iPTMnet" id="P53154"/>
<dbReference type="PaxDb" id="4932-YGL084C"/>
<dbReference type="PeptideAtlas" id="P53154"/>
<dbReference type="EnsemblFungi" id="YGL084C_mRNA">
    <property type="protein sequence ID" value="YGL084C"/>
    <property type="gene ID" value="YGL084C"/>
</dbReference>
<dbReference type="GeneID" id="852796"/>
<dbReference type="KEGG" id="sce:YGL084C"/>
<dbReference type="AGR" id="SGD:S000003052"/>
<dbReference type="SGD" id="S000003052">
    <property type="gene designation" value="GUP1"/>
</dbReference>
<dbReference type="VEuPathDB" id="FungiDB:YGL084C"/>
<dbReference type="eggNOG" id="KOG3860">
    <property type="taxonomic scope" value="Eukaryota"/>
</dbReference>
<dbReference type="GeneTree" id="ENSGT00530000063629"/>
<dbReference type="HOGENOM" id="CLU_021430_1_1_1"/>
<dbReference type="InParanoid" id="P53154"/>
<dbReference type="OMA" id="GWHRSYN"/>
<dbReference type="OrthoDB" id="420606at2759"/>
<dbReference type="BioCyc" id="YEAST:G3O-30585-MONOMER"/>
<dbReference type="BioGRID-ORCS" id="852796">
    <property type="hits" value="1 hit in 10 CRISPR screens"/>
</dbReference>
<dbReference type="PRO" id="PR:P53154"/>
<dbReference type="Proteomes" id="UP000002311">
    <property type="component" value="Chromosome VII"/>
</dbReference>
<dbReference type="RNAct" id="P53154">
    <property type="molecule type" value="protein"/>
</dbReference>
<dbReference type="GO" id="GO:0005783">
    <property type="term" value="C:endoplasmic reticulum"/>
    <property type="evidence" value="ECO:0000314"/>
    <property type="project" value="SGD"/>
</dbReference>
<dbReference type="GO" id="GO:0005789">
    <property type="term" value="C:endoplasmic reticulum membrane"/>
    <property type="evidence" value="ECO:0007669"/>
    <property type="project" value="UniProtKB-SubCell"/>
</dbReference>
<dbReference type="GO" id="GO:0031966">
    <property type="term" value="C:mitochondrial membrane"/>
    <property type="evidence" value="ECO:0007669"/>
    <property type="project" value="UniProtKB-SubCell"/>
</dbReference>
<dbReference type="GO" id="GO:0005886">
    <property type="term" value="C:plasma membrane"/>
    <property type="evidence" value="ECO:0000314"/>
    <property type="project" value="SGD"/>
</dbReference>
<dbReference type="GO" id="GO:0008374">
    <property type="term" value="F:O-acyltransferase activity"/>
    <property type="evidence" value="ECO:0000315"/>
    <property type="project" value="SGD"/>
</dbReference>
<dbReference type="GO" id="GO:0019563">
    <property type="term" value="P:glycerol catabolic process"/>
    <property type="evidence" value="ECO:0000315"/>
    <property type="project" value="SGD"/>
</dbReference>
<dbReference type="GO" id="GO:0015793">
    <property type="term" value="P:glycerol transmembrane transport"/>
    <property type="evidence" value="ECO:0000315"/>
    <property type="project" value="SGD"/>
</dbReference>
<dbReference type="GO" id="GO:0006506">
    <property type="term" value="P:GPI anchor biosynthetic process"/>
    <property type="evidence" value="ECO:0000315"/>
    <property type="project" value="SGD"/>
</dbReference>
<dbReference type="InterPro" id="IPR051085">
    <property type="entry name" value="MB_O-acyltransferase"/>
</dbReference>
<dbReference type="InterPro" id="IPR004299">
    <property type="entry name" value="MBOAT_fam"/>
</dbReference>
<dbReference type="PANTHER" id="PTHR13285">
    <property type="entry name" value="ACYLTRANSFERASE"/>
    <property type="match status" value="1"/>
</dbReference>
<dbReference type="PANTHER" id="PTHR13285:SF18">
    <property type="entry name" value="PROTEIN-CYSTEINE N-PALMITOYLTRANSFERASE RASP"/>
    <property type="match status" value="1"/>
</dbReference>
<dbReference type="Pfam" id="PF03062">
    <property type="entry name" value="MBOAT"/>
    <property type="match status" value="1"/>
</dbReference>
<reference key="1">
    <citation type="journal article" date="1997" name="Yeast">
        <title>Sequence analysis of 203 kilobases from Saccharomyces cerevisiae chromosome VII.</title>
        <authorList>
            <person name="Rieger M."/>
            <person name="Brueckner M."/>
            <person name="Schaefer M."/>
            <person name="Mueller-Auer S."/>
        </authorList>
    </citation>
    <scope>NUCLEOTIDE SEQUENCE [GENOMIC DNA]</scope>
    <source>
        <strain>ATCC 204508 / S288c</strain>
    </source>
</reference>
<reference key="2">
    <citation type="journal article" date="1997" name="Nature">
        <title>The nucleotide sequence of Saccharomyces cerevisiae chromosome VII.</title>
        <authorList>
            <person name="Tettelin H."/>
            <person name="Agostoni-Carbone M.L."/>
            <person name="Albermann K."/>
            <person name="Albers M."/>
            <person name="Arroyo J."/>
            <person name="Backes U."/>
            <person name="Barreiros T."/>
            <person name="Bertani I."/>
            <person name="Bjourson A.J."/>
            <person name="Brueckner M."/>
            <person name="Bruschi C.V."/>
            <person name="Carignani G."/>
            <person name="Castagnoli L."/>
            <person name="Cerdan E."/>
            <person name="Clemente M.L."/>
            <person name="Coblenz A."/>
            <person name="Coglievina M."/>
            <person name="Coissac E."/>
            <person name="Defoor E."/>
            <person name="Del Bino S."/>
            <person name="Delius H."/>
            <person name="Delneri D."/>
            <person name="de Wergifosse P."/>
            <person name="Dujon B."/>
            <person name="Durand P."/>
            <person name="Entian K.-D."/>
            <person name="Eraso P."/>
            <person name="Escribano V."/>
            <person name="Fabiani L."/>
            <person name="Fartmann B."/>
            <person name="Feroli F."/>
            <person name="Feuermann M."/>
            <person name="Frontali L."/>
            <person name="Garcia-Gonzalez M."/>
            <person name="Garcia-Saez M.I."/>
            <person name="Goffeau A."/>
            <person name="Guerreiro P."/>
            <person name="Hani J."/>
            <person name="Hansen M."/>
            <person name="Hebling U."/>
            <person name="Hernandez K."/>
            <person name="Heumann K."/>
            <person name="Hilger F."/>
            <person name="Hofmann B."/>
            <person name="Indge K.J."/>
            <person name="James C.M."/>
            <person name="Klima R."/>
            <person name="Koetter P."/>
            <person name="Kramer B."/>
            <person name="Kramer W."/>
            <person name="Lauquin G."/>
            <person name="Leuther H."/>
            <person name="Louis E.J."/>
            <person name="Maillier E."/>
            <person name="Marconi A."/>
            <person name="Martegani E."/>
            <person name="Mazon M.J."/>
            <person name="Mazzoni C."/>
            <person name="McReynolds A.D.K."/>
            <person name="Melchioretto P."/>
            <person name="Mewes H.-W."/>
            <person name="Minenkova O."/>
            <person name="Mueller-Auer S."/>
            <person name="Nawrocki A."/>
            <person name="Netter P."/>
            <person name="Neu R."/>
            <person name="Nombela C."/>
            <person name="Oliver S.G."/>
            <person name="Panzeri L."/>
            <person name="Paoluzi S."/>
            <person name="Plevani P."/>
            <person name="Portetelle D."/>
            <person name="Portillo F."/>
            <person name="Potier S."/>
            <person name="Purnelle B."/>
            <person name="Rieger M."/>
            <person name="Riles L."/>
            <person name="Rinaldi T."/>
            <person name="Robben J."/>
            <person name="Rodrigues-Pousada C."/>
            <person name="Rodriguez-Belmonte E."/>
            <person name="Rodriguez-Torres A.M."/>
            <person name="Rose M."/>
            <person name="Ruzzi M."/>
            <person name="Saliola M."/>
            <person name="Sanchez-Perez M."/>
            <person name="Schaefer B."/>
            <person name="Schaefer M."/>
            <person name="Scharfe M."/>
            <person name="Schmidheini T."/>
            <person name="Schreer A."/>
            <person name="Skala J."/>
            <person name="Souciet J.-L."/>
            <person name="Steensma H.Y."/>
            <person name="Talla E."/>
            <person name="Thierry A."/>
            <person name="Vandenbol M."/>
            <person name="van der Aart Q.J.M."/>
            <person name="Van Dyck L."/>
            <person name="Vanoni M."/>
            <person name="Verhasselt P."/>
            <person name="Voet M."/>
            <person name="Volckaert G."/>
            <person name="Wambutt R."/>
            <person name="Watson M.D."/>
            <person name="Weber N."/>
            <person name="Wedler E."/>
            <person name="Wedler H."/>
            <person name="Wipfli P."/>
            <person name="Wolf K."/>
            <person name="Wright L.F."/>
            <person name="Zaccaria P."/>
            <person name="Zimmermann M."/>
            <person name="Zollner A."/>
            <person name="Kleine K."/>
        </authorList>
    </citation>
    <scope>NUCLEOTIDE SEQUENCE [LARGE SCALE GENOMIC DNA]</scope>
    <source>
        <strain>ATCC 204508 / S288c</strain>
    </source>
</reference>
<reference key="3">
    <citation type="journal article" date="2014" name="G3 (Bethesda)">
        <title>The reference genome sequence of Saccharomyces cerevisiae: Then and now.</title>
        <authorList>
            <person name="Engel S.R."/>
            <person name="Dietrich F.S."/>
            <person name="Fisk D.G."/>
            <person name="Binkley G."/>
            <person name="Balakrishnan R."/>
            <person name="Costanzo M.C."/>
            <person name="Dwight S.S."/>
            <person name="Hitz B.C."/>
            <person name="Karra K."/>
            <person name="Nash R.S."/>
            <person name="Weng S."/>
            <person name="Wong E.D."/>
            <person name="Lloyd P."/>
            <person name="Skrzypek M.S."/>
            <person name="Miyasato S.R."/>
            <person name="Simison M."/>
            <person name="Cherry J.M."/>
        </authorList>
    </citation>
    <scope>GENOME REANNOTATION</scope>
    <source>
        <strain>ATCC 204508 / S288c</strain>
    </source>
</reference>
<reference key="4">
    <citation type="journal article" date="2000" name="J. Biol. Chem.">
        <title>A lecithin cholesterol acyltransferase-like gene mediates diacylglycerol esterification in yeast.</title>
        <authorList>
            <person name="Oelkers P."/>
            <person name="Tinkelenberg A."/>
            <person name="Erdeniz N."/>
            <person name="Cromley D."/>
            <person name="Billheimer J.T."/>
            <person name="Sturley S.L."/>
        </authorList>
    </citation>
    <scope>DISRUPTION PHENOTYPE</scope>
</reference>
<reference key="5">
    <citation type="journal article" date="2000" name="Mol. Microbiol.">
        <title>GUP1 and its close homologue GUP2, encoding multimembrane-spanning proteins involved in active glycerol uptake in Saccharomyces cerevisiae.</title>
        <authorList>
            <person name="Holst B."/>
            <person name="Lunde C."/>
            <person name="Lages F."/>
            <person name="Oliveira R."/>
            <person name="Lucas C."/>
            <person name="Kielland-Brandt M.C."/>
        </authorList>
    </citation>
    <scope>FUNCTION</scope>
</reference>
<reference key="6">
    <citation type="journal article" date="2000" name="Trends Biochem. Sci.">
        <title>A superfamily of membrane-bound O-acyltransferases with implications for wnt signaling.</title>
        <authorList>
            <person name="Hofmann K."/>
        </authorList>
    </citation>
    <scope>FUNCTION</scope>
</reference>
<reference key="7">
    <citation type="journal article" date="2003" name="Nature">
        <title>Global analysis of protein localization in budding yeast.</title>
        <authorList>
            <person name="Huh W.-K."/>
            <person name="Falvo J.V."/>
            <person name="Gerke L.C."/>
            <person name="Carroll A.S."/>
            <person name="Howson R.W."/>
            <person name="Weissman J.S."/>
            <person name="O'Shea E.K."/>
        </authorList>
    </citation>
    <scope>SUBCELLULAR LOCATION [LARGE SCALE ANALYSIS]</scope>
</reference>
<reference key="8">
    <citation type="journal article" date="2003" name="Nature">
        <title>Global analysis of protein expression in yeast.</title>
        <authorList>
            <person name="Ghaemmaghami S."/>
            <person name="Huh W.-K."/>
            <person name="Bower K."/>
            <person name="Howson R.W."/>
            <person name="Belle A."/>
            <person name="Dephoure N."/>
            <person name="O'Shea E.K."/>
            <person name="Weissman J.S."/>
        </authorList>
    </citation>
    <scope>LEVEL OF PROTEIN EXPRESSION [LARGE SCALE ANALYSIS]</scope>
</reference>
<reference key="9">
    <citation type="journal article" date="2004" name="Curr. Genet.">
        <title>Expression studies of GUP1 and GUP2, genes involved in glycerol active transport in Saccharomyces cerevisiae, using semi-quantitative RT-PCR.</title>
        <authorList>
            <person name="Oliveira R."/>
            <person name="Lucas C."/>
        </authorList>
    </citation>
    <scope>INDUCTION</scope>
</reference>
<reference key="10">
    <citation type="journal article" date="2004" name="FEMS Yeast Res.">
        <title>Yeast orthologues associated with glycerol transport and metabolism.</title>
        <authorList>
            <person name="Neves L."/>
            <person name="Oliveira R."/>
            <person name="Lucas C."/>
        </authorList>
    </citation>
    <scope>FUNCTION</scope>
</reference>
<reference key="11">
    <citation type="journal article" date="2005" name="Biochem. J.">
        <title>Subcellular localization and functional expression of the glycerol uptake protein 1 (GUP1) of Saccharomyces cerevisiae tagged with green fluorescent protein.</title>
        <authorList>
            <person name="Bleve G."/>
            <person name="Zacheo G."/>
            <person name="Cappello M.S."/>
            <person name="Dellaglio F."/>
            <person name="Grieco F."/>
        </authorList>
    </citation>
    <scope>SUBCELLULAR LOCATION</scope>
    <scope>TOPOLOGY</scope>
</reference>
<reference key="12">
    <citation type="journal article" date="2006" name="FEMS Yeast Res.">
        <title>Absence of Gup1p in Saccharomyces cerevisiae results in defective cell wall composition, assembly, stability and morphology.</title>
        <authorList>
            <person name="Ferreira C."/>
            <person name="Silva S."/>
            <person name="van Voorst F."/>
            <person name="Aguiar C."/>
            <person name="Kielland-Brandt M.C."/>
            <person name="Brandt A."/>
            <person name="Lucas C."/>
        </authorList>
    </citation>
    <scope>DISRUPTION PHENOTYPE</scope>
</reference>
<reference key="13">
    <citation type="journal article" date="2006" name="Mol. Biol. Cell">
        <title>GUP1 of Saccharomyces cerevisiae encodes an O-acyltransferase involved in remodeling of the GPI anchor.</title>
        <authorList>
            <person name="Bosson R."/>
            <person name="Jaquenoud M."/>
            <person name="Conzelmann A."/>
        </authorList>
    </citation>
    <scope>FUNCTION</scope>
    <scope>MUTAGENESIS OF HIS-447</scope>
</reference>
<reference key="14">
    <citation type="journal article" date="2006" name="Proc. Natl. Acad. Sci. U.S.A.">
        <title>A global topology map of the Saccharomyces cerevisiae membrane proteome.</title>
        <authorList>
            <person name="Kim H."/>
            <person name="Melen K."/>
            <person name="Oesterberg M."/>
            <person name="von Heijne G."/>
        </authorList>
    </citation>
    <scope>TOPOLOGY [LARGE SCALE ANALYSIS]</scope>
    <source>
        <strain>ATCC 208353 / W303-1A</strain>
    </source>
</reference>
<reference key="15">
    <citation type="journal article" date="2008" name="Biochim. Biophys. Acta">
        <title>The yeast O-acyltransferase Gup1p interferes in lipid metabolism with direct consequences on the sphingolipid-sterol-ordered domains integrity/assembly.</title>
        <authorList>
            <person name="Ferreira C."/>
            <person name="Lucas C."/>
        </authorList>
    </citation>
    <scope>FUNCTION</scope>
    <scope>DISRUPTION PHENOTYPE</scope>
</reference>
<reference key="16">
    <citation type="journal article" date="2008" name="Mol. Microbiol.">
        <title>The Gup1 homologue of Trypanosoma brucei is a GPI glycosylphosphatidylinositol remodelase.</title>
        <authorList>
            <person name="Jaquenoud M."/>
            <person name="Pagac M."/>
            <person name="Signorell A."/>
            <person name="Benghezal M."/>
            <person name="Jelk J."/>
            <person name="Buetikofer P."/>
            <person name="Conzelmann A."/>
        </authorList>
    </citation>
    <scope>FUNCTION</scope>
</reference>
<reference key="17">
    <citation type="journal article" date="2011" name="J. Biol. Chem.">
        <title>Topology of 1-acyl-sn-glycerol-3-phosphate acyltransferases SLC1 and ALE1 and related membrane-bound O-acyltransferases (MBOATs) of Saccharomyces cerevisiae.</title>
        <authorList>
            <person name="Pagac M."/>
            <person name="de la Mora H.V."/>
            <person name="Duperrex C."/>
            <person name="Roubaty C."/>
            <person name="Vionnet C."/>
            <person name="Conzelmann A."/>
        </authorList>
    </citation>
    <scope>TOPOLOGY</scope>
</reference>
<reference key="18">
    <citation type="journal article" date="2012" name="BMC Microbiol.">
        <title>Programmed cell death in Saccharomyces cerevisiae is hampered by the deletion of GUP1 gene.</title>
        <authorList>
            <person name="Tulha J."/>
            <person name="Faria-Oliveira F."/>
            <person name="Lucas C."/>
            <person name="Ferreira C."/>
        </authorList>
    </citation>
    <scope>FUNCTION</scope>
</reference>
<reference key="19">
    <citation type="journal article" date="2012" name="Proc. Natl. Acad. Sci. U.S.A.">
        <title>N-terminal acetylome analyses and functional insights of the N-terminal acetyltransferase NatB.</title>
        <authorList>
            <person name="Van Damme P."/>
            <person name="Lasa M."/>
            <person name="Polevoda B."/>
            <person name="Gazquez C."/>
            <person name="Elosegui-Artola A."/>
            <person name="Kim D.S."/>
            <person name="De Juan-Pardo E."/>
            <person name="Demeyer K."/>
            <person name="Hole K."/>
            <person name="Larrea E."/>
            <person name="Timmerman E."/>
            <person name="Prieto J."/>
            <person name="Arnesen T."/>
            <person name="Sherman F."/>
            <person name="Gevaert K."/>
            <person name="Aldabe R."/>
        </authorList>
    </citation>
    <scope>IDENTIFICATION BY MASS SPECTROMETRY [LARGE SCALE ANALYSIS]</scope>
</reference>
<reference key="20">
    <citation type="journal article" date="2015" name="J. Basic Microbiol.">
        <title>Elemental biochemical analysis of the polysaccharides in the extracellular matrix of the yeast Saccharomyces cerevisiae.</title>
        <authorList>
            <person name="Faria-Oliveira F."/>
            <person name="Carvalho J."/>
            <person name="Belmiro C.L."/>
            <person name="Ramalho G."/>
            <person name="Pavao M."/>
            <person name="Lucas C."/>
            <person name="Ferreira C."/>
        </authorList>
    </citation>
    <scope>FUNCTION</scope>
</reference>
<reference key="21">
    <citation type="journal article" date="2018" name="FEMS Yeast Res.">
        <title>Saccharomyces cerevisiae mitochondrial Por1/yVDAC1 (voltage-dependent anion channel 1) interacts physically with the MBOAT O-acyltransferase Gup1/HHATL in the control of cell wall integrity and programmed cell death.</title>
        <authorList>
            <person name="Tulha J."/>
            <person name="Lucas C."/>
        </authorList>
    </citation>
    <scope>INTERACTION WITH POR1</scope>
    <scope>SUBCELLULAR LOCATION</scope>
</reference>
<keyword id="KW-1003">Cell membrane</keyword>
<keyword id="KW-0256">Endoplasmic reticulum</keyword>
<keyword id="KW-0472">Membrane</keyword>
<keyword id="KW-0496">Mitochondrion</keyword>
<keyword id="KW-1185">Reference proteome</keyword>
<keyword id="KW-0812">Transmembrane</keyword>
<keyword id="KW-1133">Transmembrane helix</keyword>
<sequence>MSLISILSPLITSEGLDSRIKPSPKKDASTTTKPSLWKTTEFKFYYIAFLVVVPLMFYAGLQASSPENPNYARYERLLSQGWLFGRKVDNSDSQYRFFRDNFALLSVLMLVHTSIKRIVLYSTNITKLRFDLIFGLIFLVAAHGVNSIRILAHMLILYAIAHVLKNFRRIATISIWIYGISTLFINDNFRAYPFGNICSFLSPLDHWYRGIIPRWDVFFNFTLLRVLSYNLDFLERWENLQKKKSPSYESKEAKSAILLNERARLTAAHPIQDYSLMNYIAYVTYTPLFIAGPIITFNDYVYQSKHTLPSINFKFIFYYAVRFVIALLSMEFILHFLHVVAISKTKAWENDTPFQISMIGLFNLNIIWLKLLIPWRLFRLWALLDGIDTPENMIRCVDNNYSSLAFWRAWHRSYNKWVVRYIYIPLGGSKNRVLTSLAVFSFVAIWHDIELKLLLWGWLIVLFLLPEIFATQIFSHYTDAVWYRHVCAVGAVFNIWVMMIANLFGFCLGSDGTKKLLSDMFCTVSGFKFVILASVSLFIAVQIMFEIREEEKRHGIYLKC</sequence>
<evidence type="ECO:0000255" key="1"/>
<evidence type="ECO:0000269" key="2">
    <source>
    </source>
</evidence>
<evidence type="ECO:0000269" key="3">
    <source>
    </source>
</evidence>
<evidence type="ECO:0000269" key="4">
    <source>
    </source>
</evidence>
<evidence type="ECO:0000269" key="5">
    <source>
    </source>
</evidence>
<evidence type="ECO:0000269" key="6">
    <source>
    </source>
</evidence>
<evidence type="ECO:0000269" key="7">
    <source>
    </source>
</evidence>
<evidence type="ECO:0000269" key="8">
    <source>
    </source>
</evidence>
<evidence type="ECO:0000269" key="9">
    <source>
    </source>
</evidence>
<evidence type="ECO:0000269" key="10">
    <source>
    </source>
</evidence>
<evidence type="ECO:0000269" key="11">
    <source>
    </source>
</evidence>
<evidence type="ECO:0000269" key="12">
    <source>
    </source>
</evidence>
<evidence type="ECO:0000269" key="13">
    <source>
    </source>
</evidence>
<evidence type="ECO:0000269" key="14">
    <source>
    </source>
</evidence>
<evidence type="ECO:0000269" key="15">
    <source>
    </source>
</evidence>
<evidence type="ECO:0000305" key="16"/>
<evidence type="ECO:0000305" key="17">
    <source>
    </source>
</evidence>
<evidence type="ECO:0000305" key="18">
    <source>
    </source>
</evidence>
<evidence type="ECO:0000305" key="19">
    <source>
    </source>
</evidence>
<evidence type="ECO:0000305" key="20">
    <source>
    </source>
</evidence>
<evidence type="ECO:0000305" key="21">
    <source>
    </source>
</evidence>
<evidence type="ECO:0000305" key="22">
    <source>
    </source>
</evidence>
<protein>
    <recommendedName>
        <fullName evidence="16">Membrane-bound O-acyltransferase GUP1</fullName>
    </recommendedName>
    <alternativeName>
        <fullName>Glycerol uptake protein 1</fullName>
    </alternativeName>
</protein>
<proteinExistence type="evidence at protein level"/>
<comment type="function">
    <text evidence="7 10 11 13 14 15">Membrane-bound O-acyltransferase involved in the remodeling of glycosylphosphatidylinositol (GPI) anchors. Acts only on GPI-anchored proteins, but not on free GPI lipids. Acts as an acyltransferase for GPI anchors that adds C26 fatty acids to the sn2 position of lyso-PI-containing GPI anchors. PER1 first deacylates, GUP1 subsequently reacylates the anchor lipid, thus replacing a shorter fatty acid (C16:0 or C18:0) by C26:0 (PubMed:16597698, PubMed:18036137). Also involved in lipid metabolism, having profound effects on sphingolipid-sterol-ordered domains integrity and assembly (PubMed:18786505). Together with GUP2, has an influence on the chemical composition of the yeast extracellular matrix (yECM) in yeast multicellular aggregates, such as biofilms and colonies (PubMed:25589358). Involved in cell integrity and apoptosis (PubMed:22617017, PubMed:30184078).</text>
</comment>
<comment type="subunit">
    <text evidence="15">Interacts with mitochondrial outer membrane voltage-dependent anion channel (VDAC) POR1.</text>
</comment>
<comment type="subcellular location">
    <subcellularLocation>
        <location evidence="6">Cell membrane</location>
        <topology evidence="1">Multi-pass membrane protein</topology>
    </subcellularLocation>
    <subcellularLocation>
        <location evidence="3 6">Endoplasmic reticulum membrane</location>
        <topology evidence="1">Multi-pass membrane protein</topology>
    </subcellularLocation>
    <subcellularLocation>
        <location evidence="15">Mitochondrion membrane</location>
        <topology evidence="1">Multi-pass membrane protein</topology>
    </subcellularLocation>
</comment>
<comment type="induction">
    <text evidence="5">Expressed constitutively.</text>
</comment>
<comment type="disruption phenotype">
    <text evidence="2 7 9 11">Results in an increase in triglyceride (TG) synthesis with a concomitant decrease in phospholipid (PL) synthesis and exhibits an altered plasma membrane lipid composition (PubMed:10747858). Shows defects in cell wall assembly and stability and abnormal cell wall morphology (PubMed:17042752). Deficient in GPI anchor remodeling, mutant cells only contain the primary, unremodeled phosphatidylinositol (PI) and are unable to attach remodeled PI or ceramides to the anchor (PubMed:16597698). Defective in sterol lipid distribution (PubMed:18786505).</text>
</comment>
<comment type="miscellaneous">
    <text evidence="4">Present with 672 molecules/cell in log phase SD medium.</text>
</comment>
<comment type="similarity">
    <text evidence="16">Belongs to the membrane-bound acyltransferase family.</text>
</comment>
<comment type="caution">
    <text evidence="17 18 19">Was originally thought to be involved in active uptake of glycerol driven by electrogenic proton symport (PubMed:10931309), but has later been shown to be an acyltransferase and that effects on glycerol transport may be indirect (PubMed:10694878, PubMed:15381122).</text>
</comment>
<organism>
    <name type="scientific">Saccharomyces cerevisiae (strain ATCC 204508 / S288c)</name>
    <name type="common">Baker's yeast</name>
    <dbReference type="NCBI Taxonomy" id="559292"/>
    <lineage>
        <taxon>Eukaryota</taxon>
        <taxon>Fungi</taxon>
        <taxon>Dikarya</taxon>
        <taxon>Ascomycota</taxon>
        <taxon>Saccharomycotina</taxon>
        <taxon>Saccharomycetes</taxon>
        <taxon>Saccharomycetales</taxon>
        <taxon>Saccharomycetaceae</taxon>
        <taxon>Saccharomyces</taxon>
    </lineage>
</organism>
<gene>
    <name type="primary">GUP1</name>
    <name type="ordered locus">YGL084C</name>
</gene>